<dbReference type="EMBL" id="AY916449">
    <property type="protein sequence ID" value="AAW82530.1"/>
    <property type="molecule type" value="Genomic_DNA"/>
</dbReference>
<dbReference type="RefSeq" id="YP_358612.1">
    <property type="nucleotide sequence ID" value="NC_007499.1"/>
</dbReference>
<dbReference type="SMR" id="Q3BAK6"/>
<dbReference type="GeneID" id="3741711"/>
<dbReference type="GO" id="GO:0009535">
    <property type="term" value="C:chloroplast thylakoid membrane"/>
    <property type="evidence" value="ECO:0007669"/>
    <property type="project" value="UniProtKB-SubCell"/>
</dbReference>
<dbReference type="GO" id="GO:0045158">
    <property type="term" value="F:electron transporter, transferring electrons within cytochrome b6/f complex of photosystem II activity"/>
    <property type="evidence" value="ECO:0007669"/>
    <property type="project" value="UniProtKB-UniRule"/>
</dbReference>
<dbReference type="GO" id="GO:0045156">
    <property type="term" value="F:electron transporter, transferring electrons within the cyclic electron transport pathway of photosynthesis activity"/>
    <property type="evidence" value="ECO:0007669"/>
    <property type="project" value="InterPro"/>
</dbReference>
<dbReference type="GO" id="GO:0016491">
    <property type="term" value="F:oxidoreductase activity"/>
    <property type="evidence" value="ECO:0007669"/>
    <property type="project" value="InterPro"/>
</dbReference>
<dbReference type="GO" id="GO:0009767">
    <property type="term" value="P:photosynthetic electron transport chain"/>
    <property type="evidence" value="ECO:0007669"/>
    <property type="project" value="InterPro"/>
</dbReference>
<dbReference type="CDD" id="cd00290">
    <property type="entry name" value="cytochrome_b_C"/>
    <property type="match status" value="1"/>
</dbReference>
<dbReference type="FunFam" id="1.10.287.980:FF:000001">
    <property type="entry name" value="Cytochrome b6-f complex subunit 4"/>
    <property type="match status" value="1"/>
</dbReference>
<dbReference type="FunFam" id="1.20.5.510:FF:000002">
    <property type="entry name" value="Cytochrome b6-f complex subunit 4"/>
    <property type="match status" value="1"/>
</dbReference>
<dbReference type="Gene3D" id="1.10.287.980">
    <property type="entry name" value="plastocyanin oxidoreductase"/>
    <property type="match status" value="1"/>
</dbReference>
<dbReference type="Gene3D" id="1.20.5.510">
    <property type="entry name" value="Single helix bin"/>
    <property type="match status" value="1"/>
</dbReference>
<dbReference type="HAMAP" id="MF_01344">
    <property type="entry name" value="Cytb6_f_subIV"/>
    <property type="match status" value="1"/>
</dbReference>
<dbReference type="InterPro" id="IPR005798">
    <property type="entry name" value="Cyt_b/b6_C"/>
</dbReference>
<dbReference type="InterPro" id="IPR036150">
    <property type="entry name" value="Cyt_b/b6_C_sf"/>
</dbReference>
<dbReference type="InterPro" id="IPR005870">
    <property type="entry name" value="Cyt_b6/f_cplx_suIV"/>
</dbReference>
<dbReference type="InterPro" id="IPR048260">
    <property type="entry name" value="Cytochrome_b_C_euk/bac"/>
</dbReference>
<dbReference type="NCBIfam" id="TIGR01156">
    <property type="entry name" value="cytb6_f_IV"/>
    <property type="match status" value="1"/>
</dbReference>
<dbReference type="PANTHER" id="PTHR19271">
    <property type="entry name" value="CYTOCHROME B"/>
    <property type="match status" value="1"/>
</dbReference>
<dbReference type="PANTHER" id="PTHR19271:SF40">
    <property type="entry name" value="CYTOCHROME B"/>
    <property type="match status" value="1"/>
</dbReference>
<dbReference type="Pfam" id="PF00032">
    <property type="entry name" value="Cytochrom_B_C"/>
    <property type="match status" value="1"/>
</dbReference>
<dbReference type="PIRSF" id="PIRSF000033">
    <property type="entry name" value="B6f_17K"/>
    <property type="match status" value="1"/>
</dbReference>
<dbReference type="SUPFAM" id="SSF81648">
    <property type="entry name" value="a domain/subunit of cytochrome bc1 complex (Ubiquinol-cytochrome c reductase)"/>
    <property type="match status" value="1"/>
</dbReference>
<dbReference type="PROSITE" id="PS51003">
    <property type="entry name" value="CYTB_CTER"/>
    <property type="match status" value="1"/>
</dbReference>
<name>PETD_PHAAO</name>
<accession>Q3BAK6</accession>
<evidence type="ECO:0000250" key="1"/>
<evidence type="ECO:0000255" key="2">
    <source>
        <dbReference type="HAMAP-Rule" id="MF_01344"/>
    </source>
</evidence>
<organism>
    <name type="scientific">Phalaenopsis aphrodite subsp. formosana</name>
    <name type="common">Moth orchid</name>
    <dbReference type="NCBI Taxonomy" id="308872"/>
    <lineage>
        <taxon>Eukaryota</taxon>
        <taxon>Viridiplantae</taxon>
        <taxon>Streptophyta</taxon>
        <taxon>Embryophyta</taxon>
        <taxon>Tracheophyta</taxon>
        <taxon>Spermatophyta</taxon>
        <taxon>Magnoliopsida</taxon>
        <taxon>Liliopsida</taxon>
        <taxon>Asparagales</taxon>
        <taxon>Orchidaceae</taxon>
        <taxon>Epidendroideae</taxon>
        <taxon>Vandeae</taxon>
        <taxon>Aeridinae</taxon>
        <taxon>Phalaenopsis</taxon>
    </lineage>
</organism>
<sequence>MGVTKKPDLNDPVLRAKLAKGMGHNYYGEPAWPNDLLYIFPVVILGTIACNVGLAVLEPSMIGEPADPFATPLEILPEWYFFPVFQILRTVPNKLLGVLLMVSVPLGLLTVPFLENVNKFQNPFRRPVATTVFLIGTAVALWLGIGATLPIEKSLTLGLFQID</sequence>
<feature type="chain" id="PRO_0000061880" description="Cytochrome b6-f complex subunit 4">
    <location>
        <begin position="1"/>
        <end position="163"/>
    </location>
</feature>
<feature type="transmembrane region" description="Helical" evidence="2">
    <location>
        <begin position="36"/>
        <end position="56"/>
    </location>
</feature>
<feature type="transmembrane region" description="Helical" evidence="2">
    <location>
        <begin position="95"/>
        <end position="115"/>
    </location>
</feature>
<feature type="transmembrane region" description="Helical" evidence="2">
    <location>
        <begin position="131"/>
        <end position="151"/>
    </location>
</feature>
<reference key="1">
    <citation type="journal article" date="2006" name="Mol. Biol. Evol.">
        <title>The chloroplast genome of Phalaenopsis aphrodite (Orchidaceae): comparative analysis of evolutionary rate with that of grasses and its phylogenetic implications.</title>
        <authorList>
            <person name="Chang C.-C."/>
            <person name="Lin H.-C."/>
            <person name="Lin I.-P."/>
            <person name="Chow T.-Y."/>
            <person name="Chen H.-H."/>
            <person name="Chen W.-H."/>
            <person name="Cheng C.-H."/>
            <person name="Lin C.-Y."/>
            <person name="Liu S.-M."/>
            <person name="Chang C.-C."/>
            <person name="Chaw S.-M."/>
        </authorList>
    </citation>
    <scope>NUCLEOTIDE SEQUENCE [LARGE SCALE GENOMIC DNA]</scope>
    <source>
        <strain>cv. Taisugar TS-97</strain>
    </source>
</reference>
<comment type="function">
    <text evidence="2">Component of the cytochrome b6-f complex, which mediates electron transfer between photosystem II (PSII) and photosystem I (PSI), cyclic electron flow around PSI, and state transitions.</text>
</comment>
<comment type="subunit">
    <text evidence="1">The 4 large subunits of the cytochrome b6-f complex are cytochrome b6, subunit IV (17 kDa polypeptide, petD), cytochrome f and the Rieske protein, while the 4 small subunits are petG, petL, petM and petN. The complex functions as a dimer (By similarity).</text>
</comment>
<comment type="subcellular location">
    <subcellularLocation>
        <location evidence="2">Plastid</location>
        <location evidence="2">Chloroplast thylakoid membrane</location>
        <topology evidence="2">Multi-pass membrane protein</topology>
    </subcellularLocation>
</comment>
<comment type="similarity">
    <text evidence="2">Belongs to the cytochrome b family. PetD subfamily.</text>
</comment>
<geneLocation type="chloroplast"/>
<gene>
    <name evidence="2" type="primary">petD</name>
</gene>
<proteinExistence type="inferred from homology"/>
<keyword id="KW-0150">Chloroplast</keyword>
<keyword id="KW-0249">Electron transport</keyword>
<keyword id="KW-0472">Membrane</keyword>
<keyword id="KW-0602">Photosynthesis</keyword>
<keyword id="KW-0934">Plastid</keyword>
<keyword id="KW-0793">Thylakoid</keyword>
<keyword id="KW-0812">Transmembrane</keyword>
<keyword id="KW-1133">Transmembrane helix</keyword>
<keyword id="KW-0813">Transport</keyword>
<protein>
    <recommendedName>
        <fullName evidence="2">Cytochrome b6-f complex subunit 4</fullName>
    </recommendedName>
    <alternativeName>
        <fullName evidence="2">17 kDa polypeptide</fullName>
    </alternativeName>
</protein>